<sequence>MKEYIRPFLNQKNISENSKIAYSYDLEQFIEEVHDRITETNLRIYQASIKDFKAAVQKRKLSAVNQFLYFLYQQQLIEEFHRLVLPKVSVSKEQENELLDLSAFWQESSVPRGRLMALLILEMGLLPSEILQVRVADVNLDFQVLKIEKAGQKRVIKIPESLTSELEDYLTGTYLFEKNGKSYSRQWGFRQLEAFLIEQGQASLSAQSLREQFILRQREKGIGLYDIAQDLGLKTMITLEKYR</sequence>
<feature type="chain" id="PRO_0000355194" description="Tyrosine recombinase XerD-like">
    <location>
        <begin position="1"/>
        <end position="243"/>
    </location>
</feature>
<feature type="domain" description="Core-binding (CB)" evidence="3">
    <location>
        <begin position="1"/>
        <end position="72"/>
    </location>
</feature>
<feature type="domain" description="Tyr recombinase" evidence="2">
    <location>
        <begin position="85"/>
        <end position="243"/>
    </location>
</feature>
<feature type="active site" evidence="2">
    <location>
        <position position="149"/>
    </location>
</feature>
<feature type="active site" evidence="2">
    <location>
        <position position="210"/>
    </location>
</feature>
<feature type="active site" description="O-(3'-phospho-DNA)-tyrosine intermediate" evidence="2">
    <location>
        <position position="242"/>
    </location>
</feature>
<comment type="function">
    <text evidence="1">Putative tyrosine recombinase. Not involved in the cutting and rejoining of the recombining DNA molecules on dif(SL) site.</text>
</comment>
<comment type="subcellular location">
    <subcellularLocation>
        <location evidence="1">Cytoplasm</location>
    </subcellularLocation>
</comment>
<comment type="similarity">
    <text evidence="1">Belongs to the 'phage' integrase family. XerD-like subfamily.</text>
</comment>
<organism>
    <name type="scientific">Streptococcus sanguinis (strain SK36)</name>
    <dbReference type="NCBI Taxonomy" id="388919"/>
    <lineage>
        <taxon>Bacteria</taxon>
        <taxon>Bacillati</taxon>
        <taxon>Bacillota</taxon>
        <taxon>Bacilli</taxon>
        <taxon>Lactobacillales</taxon>
        <taxon>Streptococcaceae</taxon>
        <taxon>Streptococcus</taxon>
    </lineage>
</organism>
<proteinExistence type="inferred from homology"/>
<accession>A3CPQ8</accession>
<name>XERDL_STRSV</name>
<gene>
    <name type="ordered locus">SSA_1780</name>
</gene>
<reference key="1">
    <citation type="journal article" date="2007" name="J. Bacteriol.">
        <title>Genome of the opportunistic pathogen Streptococcus sanguinis.</title>
        <authorList>
            <person name="Xu P."/>
            <person name="Alves J.M."/>
            <person name="Kitten T."/>
            <person name="Brown A."/>
            <person name="Chen Z."/>
            <person name="Ozaki L.S."/>
            <person name="Manque P."/>
            <person name="Ge X."/>
            <person name="Serrano M.G."/>
            <person name="Puiu D."/>
            <person name="Hendricks S."/>
            <person name="Wang Y."/>
            <person name="Chaplin M.D."/>
            <person name="Akan D."/>
            <person name="Paik S."/>
            <person name="Peterson D.L."/>
            <person name="Macrina F.L."/>
            <person name="Buck G.A."/>
        </authorList>
    </citation>
    <scope>NUCLEOTIDE SEQUENCE [LARGE SCALE GENOMIC DNA]</scope>
    <source>
        <strain>SK36</strain>
    </source>
</reference>
<keyword id="KW-0963">Cytoplasm</keyword>
<keyword id="KW-0229">DNA integration</keyword>
<keyword id="KW-0233">DNA recombination</keyword>
<keyword id="KW-0238">DNA-binding</keyword>
<keyword id="KW-1185">Reference proteome</keyword>
<evidence type="ECO:0000255" key="1">
    <source>
        <dbReference type="HAMAP-Rule" id="MF_01817"/>
    </source>
</evidence>
<evidence type="ECO:0000255" key="2">
    <source>
        <dbReference type="PROSITE-ProRule" id="PRU01246"/>
    </source>
</evidence>
<evidence type="ECO:0000255" key="3">
    <source>
        <dbReference type="PROSITE-ProRule" id="PRU01248"/>
    </source>
</evidence>
<dbReference type="EMBL" id="CP000387">
    <property type="protein sequence ID" value="ABN45163.1"/>
    <property type="molecule type" value="Genomic_DNA"/>
</dbReference>
<dbReference type="RefSeq" id="WP_011837356.1">
    <property type="nucleotide sequence ID" value="NC_009009.1"/>
</dbReference>
<dbReference type="RefSeq" id="YP_001035713.1">
    <property type="nucleotide sequence ID" value="NC_009009.1"/>
</dbReference>
<dbReference type="SMR" id="A3CPQ8"/>
<dbReference type="STRING" id="388919.SSA_1780"/>
<dbReference type="KEGG" id="ssa:SSA_1780"/>
<dbReference type="PATRIC" id="fig|388919.9.peg.1688"/>
<dbReference type="eggNOG" id="COG4974">
    <property type="taxonomic scope" value="Bacteria"/>
</dbReference>
<dbReference type="HOGENOM" id="CLU_1128554_0_0_9"/>
<dbReference type="OrthoDB" id="2241487at2"/>
<dbReference type="Proteomes" id="UP000002148">
    <property type="component" value="Chromosome"/>
</dbReference>
<dbReference type="GO" id="GO:0005737">
    <property type="term" value="C:cytoplasm"/>
    <property type="evidence" value="ECO:0007669"/>
    <property type="project" value="UniProtKB-SubCell"/>
</dbReference>
<dbReference type="GO" id="GO:0003677">
    <property type="term" value="F:DNA binding"/>
    <property type="evidence" value="ECO:0007669"/>
    <property type="project" value="UniProtKB-KW"/>
</dbReference>
<dbReference type="GO" id="GO:0009037">
    <property type="term" value="F:tyrosine-based site-specific recombinase activity"/>
    <property type="evidence" value="ECO:0007669"/>
    <property type="project" value="UniProtKB-UniRule"/>
</dbReference>
<dbReference type="GO" id="GO:0006313">
    <property type="term" value="P:DNA transposition"/>
    <property type="evidence" value="ECO:0007669"/>
    <property type="project" value="UniProtKB-UniRule"/>
</dbReference>
<dbReference type="CDD" id="cd01190">
    <property type="entry name" value="INT_StrepXerD_C_like"/>
    <property type="match status" value="1"/>
</dbReference>
<dbReference type="Gene3D" id="1.10.150.130">
    <property type="match status" value="1"/>
</dbReference>
<dbReference type="Gene3D" id="1.10.443.10">
    <property type="entry name" value="Intergrase catalytic core"/>
    <property type="match status" value="1"/>
</dbReference>
<dbReference type="HAMAP" id="MF_01817">
    <property type="entry name" value="Recomb_XerD_like"/>
    <property type="match status" value="1"/>
</dbReference>
<dbReference type="InterPro" id="IPR044068">
    <property type="entry name" value="CB"/>
</dbReference>
<dbReference type="InterPro" id="IPR011010">
    <property type="entry name" value="DNA_brk_join_enz"/>
</dbReference>
<dbReference type="InterPro" id="IPR013762">
    <property type="entry name" value="Integrase-like_cat_sf"/>
</dbReference>
<dbReference type="InterPro" id="IPR002104">
    <property type="entry name" value="Integrase_catalytic"/>
</dbReference>
<dbReference type="InterPro" id="IPR010998">
    <property type="entry name" value="Integrase_recombinase_N"/>
</dbReference>
<dbReference type="InterPro" id="IPR004107">
    <property type="entry name" value="Integrase_SAM-like_N"/>
</dbReference>
<dbReference type="InterPro" id="IPR020876">
    <property type="entry name" value="Tyrosine_recombinase_XerD-like"/>
</dbReference>
<dbReference type="NCBIfam" id="NF002685">
    <property type="entry name" value="PRK02436.1"/>
    <property type="match status" value="1"/>
</dbReference>
<dbReference type="Pfam" id="PF02899">
    <property type="entry name" value="Phage_int_SAM_1"/>
    <property type="match status" value="1"/>
</dbReference>
<dbReference type="Pfam" id="PF00589">
    <property type="entry name" value="Phage_integrase"/>
    <property type="match status" value="1"/>
</dbReference>
<dbReference type="SUPFAM" id="SSF56349">
    <property type="entry name" value="DNA breaking-rejoining enzymes"/>
    <property type="match status" value="1"/>
</dbReference>
<dbReference type="PROSITE" id="PS51900">
    <property type="entry name" value="CB"/>
    <property type="match status" value="1"/>
</dbReference>
<dbReference type="PROSITE" id="PS51898">
    <property type="entry name" value="TYR_RECOMBINASE"/>
    <property type="match status" value="1"/>
</dbReference>
<protein>
    <recommendedName>
        <fullName evidence="1">Tyrosine recombinase XerD-like</fullName>
    </recommendedName>
</protein>